<evidence type="ECO:0000255" key="1">
    <source>
        <dbReference type="HAMAP-Rule" id="MF_01587"/>
    </source>
</evidence>
<protein>
    <recommendedName>
        <fullName evidence="1">DNA ligase B</fullName>
        <ecNumber evidence="1">6.5.1.2</ecNumber>
    </recommendedName>
    <alternativeName>
        <fullName evidence="1">Polydeoxyribonucleotide synthase [NAD(+)] B</fullName>
    </alternativeName>
</protein>
<comment type="function">
    <text evidence="1">Catalyzes the formation of phosphodiester linkages between 5'-phosphoryl and 3'-hydroxyl groups in double-stranded DNA using NAD as a coenzyme and as the energy source for the reaction.</text>
</comment>
<comment type="catalytic activity">
    <reaction evidence="1">
        <text>NAD(+) + (deoxyribonucleotide)n-3'-hydroxyl + 5'-phospho-(deoxyribonucleotide)m = (deoxyribonucleotide)n+m + AMP + beta-nicotinamide D-nucleotide.</text>
        <dbReference type="EC" id="6.5.1.2"/>
    </reaction>
</comment>
<comment type="similarity">
    <text evidence="1">Belongs to the NAD-dependent DNA ligase family. LigB subfamily.</text>
</comment>
<proteinExistence type="inferred from homology"/>
<feature type="chain" id="PRO_1000087959" description="DNA ligase B">
    <location>
        <begin position="1"/>
        <end position="561"/>
    </location>
</feature>
<feature type="active site" description="N6-AMP-lysine intermediate" evidence="1">
    <location>
        <position position="125"/>
    </location>
</feature>
<gene>
    <name evidence="1" type="primary">ligB</name>
    <name type="ordered locus">SPAB_04639</name>
</gene>
<reference key="1">
    <citation type="submission" date="2007-11" db="EMBL/GenBank/DDBJ databases">
        <authorList>
            <consortium name="The Salmonella enterica serovar Paratyphi B Genome Sequencing Project"/>
            <person name="McClelland M."/>
            <person name="Sanderson E.K."/>
            <person name="Porwollik S."/>
            <person name="Spieth J."/>
            <person name="Clifton W.S."/>
            <person name="Fulton R."/>
            <person name="Cordes M."/>
            <person name="Wollam A."/>
            <person name="Shah N."/>
            <person name="Pepin K."/>
            <person name="Bhonagiri V."/>
            <person name="Nash W."/>
            <person name="Johnson M."/>
            <person name="Thiruvilangam P."/>
            <person name="Wilson R."/>
        </authorList>
    </citation>
    <scope>NUCLEOTIDE SEQUENCE [LARGE SCALE GENOMIC DNA]</scope>
    <source>
        <strain>ATCC BAA-1250 / SPB7</strain>
    </source>
</reference>
<dbReference type="EC" id="6.5.1.2" evidence="1"/>
<dbReference type="EMBL" id="CP000886">
    <property type="protein sequence ID" value="ABX69952.1"/>
    <property type="molecule type" value="Genomic_DNA"/>
</dbReference>
<dbReference type="RefSeq" id="WP_001241826.1">
    <property type="nucleotide sequence ID" value="NC_010102.1"/>
</dbReference>
<dbReference type="SMR" id="A9MVP4"/>
<dbReference type="KEGG" id="spq:SPAB_04639"/>
<dbReference type="PATRIC" id="fig|1016998.12.peg.4365"/>
<dbReference type="HOGENOM" id="CLU_489786_0_0_6"/>
<dbReference type="BioCyc" id="SENT1016998:SPAB_RS18890-MONOMER"/>
<dbReference type="Proteomes" id="UP000008556">
    <property type="component" value="Chromosome"/>
</dbReference>
<dbReference type="GO" id="GO:0003911">
    <property type="term" value="F:DNA ligase (NAD+) activity"/>
    <property type="evidence" value="ECO:0007669"/>
    <property type="project" value="UniProtKB-UniRule"/>
</dbReference>
<dbReference type="GO" id="GO:0006281">
    <property type="term" value="P:DNA repair"/>
    <property type="evidence" value="ECO:0007669"/>
    <property type="project" value="UniProtKB-KW"/>
</dbReference>
<dbReference type="GO" id="GO:0006260">
    <property type="term" value="P:DNA replication"/>
    <property type="evidence" value="ECO:0007669"/>
    <property type="project" value="UniProtKB-KW"/>
</dbReference>
<dbReference type="FunFam" id="1.10.287.610:FF:000003">
    <property type="entry name" value="DNA ligase B"/>
    <property type="match status" value="1"/>
</dbReference>
<dbReference type="FunFam" id="2.40.50.140:FF:000139">
    <property type="entry name" value="DNA ligase B"/>
    <property type="match status" value="1"/>
</dbReference>
<dbReference type="FunFam" id="3.30.470.30:FF:000007">
    <property type="entry name" value="DNA ligase B"/>
    <property type="match status" value="1"/>
</dbReference>
<dbReference type="Gene3D" id="1.10.150.20">
    <property type="entry name" value="5' to 3' exonuclease, C-terminal subdomain"/>
    <property type="match status" value="1"/>
</dbReference>
<dbReference type="Gene3D" id="3.30.470.30">
    <property type="entry name" value="DNA ligase/mRNA capping enzyme"/>
    <property type="match status" value="1"/>
</dbReference>
<dbReference type="Gene3D" id="1.10.287.610">
    <property type="entry name" value="Helix hairpin bin"/>
    <property type="match status" value="1"/>
</dbReference>
<dbReference type="Gene3D" id="2.40.50.140">
    <property type="entry name" value="Nucleic acid-binding proteins"/>
    <property type="match status" value="1"/>
</dbReference>
<dbReference type="HAMAP" id="MF_01587">
    <property type="entry name" value="DNA_ligase_B"/>
    <property type="match status" value="1"/>
</dbReference>
<dbReference type="InterPro" id="IPR018239">
    <property type="entry name" value="DNA_ligase_AS"/>
</dbReference>
<dbReference type="InterPro" id="IPR020923">
    <property type="entry name" value="DNA_ligase_B"/>
</dbReference>
<dbReference type="InterPro" id="IPR033136">
    <property type="entry name" value="DNA_ligase_CS"/>
</dbReference>
<dbReference type="InterPro" id="IPR013839">
    <property type="entry name" value="DNAligase_adenylation"/>
</dbReference>
<dbReference type="InterPro" id="IPR013840">
    <property type="entry name" value="DNAligase_N"/>
</dbReference>
<dbReference type="InterPro" id="IPR012340">
    <property type="entry name" value="NA-bd_OB-fold"/>
</dbReference>
<dbReference type="InterPro" id="IPR050326">
    <property type="entry name" value="NAD_dep_DNA_ligaseB"/>
</dbReference>
<dbReference type="InterPro" id="IPR004150">
    <property type="entry name" value="NAD_DNA_ligase_OB"/>
</dbReference>
<dbReference type="InterPro" id="IPR010994">
    <property type="entry name" value="RuvA_2-like"/>
</dbReference>
<dbReference type="NCBIfam" id="NF005987">
    <property type="entry name" value="PRK08097.1"/>
    <property type="match status" value="1"/>
</dbReference>
<dbReference type="PANTHER" id="PTHR47810">
    <property type="entry name" value="DNA LIGASE"/>
    <property type="match status" value="1"/>
</dbReference>
<dbReference type="PANTHER" id="PTHR47810:SF1">
    <property type="entry name" value="DNA LIGASE B"/>
    <property type="match status" value="1"/>
</dbReference>
<dbReference type="Pfam" id="PF01653">
    <property type="entry name" value="DNA_ligase_aden"/>
    <property type="match status" value="1"/>
</dbReference>
<dbReference type="Pfam" id="PF03120">
    <property type="entry name" value="DNA_ligase_OB"/>
    <property type="match status" value="1"/>
</dbReference>
<dbReference type="SMART" id="SM00532">
    <property type="entry name" value="LIGANc"/>
    <property type="match status" value="1"/>
</dbReference>
<dbReference type="SUPFAM" id="SSF56091">
    <property type="entry name" value="DNA ligase/mRNA capping enzyme, catalytic domain"/>
    <property type="match status" value="1"/>
</dbReference>
<dbReference type="SUPFAM" id="SSF50249">
    <property type="entry name" value="Nucleic acid-binding proteins"/>
    <property type="match status" value="1"/>
</dbReference>
<dbReference type="SUPFAM" id="SSF47781">
    <property type="entry name" value="RuvA domain 2-like"/>
    <property type="match status" value="1"/>
</dbReference>
<dbReference type="PROSITE" id="PS01055">
    <property type="entry name" value="DNA_LIGASE_N1"/>
    <property type="match status" value="1"/>
</dbReference>
<dbReference type="PROSITE" id="PS01056">
    <property type="entry name" value="DNA_LIGASE_N2"/>
    <property type="match status" value="1"/>
</dbReference>
<sequence>MRLWKSMAWGILLWHSQSGALCPAWPPARAAEEIARLQQQLADWNDIYWKQGVSAVDDSVYDQLSARLVQWQRCVGQDVSSTPVSPPLNGTTMHPVAHTGVRKLADRQAVEQWMRGRSELWVQPKVDGVAVTLVYQNGKLARAISRGNGLQGEDWTPKIRLIPSIPQTTQGALANAVLQGEIFLQREGHIQQRMGGMNARSKVAGMLMRQDNASALNSLGIFIWAWPDGPANMPERLSQLAKAGFSLTKKYSLAVKNASEVERARQSWLTSALPFVTDGVVIRMAKEPASQHWRPGQGDWLAAWKYPPVAQVAQVSAIQFSVGKSGKITVVASLVPVILDDKRVQRVNIGSVKRWEAWDIAPGDQILVSLAGQGIPRLDEVVWRSRERSKPVPPDSHFNSLTCFYASETCQEQFISRLVWLGSRSALGLDGMGEASWRALHQTHRFEHIFSWLALTSAQIANTPGFAKGKSEQIWRQFNLARRQPFTRWIMAMDIPLTQAALQASGDRSWEQLLMRTEQHWRQLPATGERRAGRVIDWRDNPQIKTLSRWLAAQHIPGFGS</sequence>
<name>LIGB_SALPB</name>
<accession>A9MVP4</accession>
<keyword id="KW-0227">DNA damage</keyword>
<keyword id="KW-0234">DNA repair</keyword>
<keyword id="KW-0235">DNA replication</keyword>
<keyword id="KW-0436">Ligase</keyword>
<keyword id="KW-0520">NAD</keyword>
<organism>
    <name type="scientific">Salmonella paratyphi B (strain ATCC BAA-1250 / SPB7)</name>
    <dbReference type="NCBI Taxonomy" id="1016998"/>
    <lineage>
        <taxon>Bacteria</taxon>
        <taxon>Pseudomonadati</taxon>
        <taxon>Pseudomonadota</taxon>
        <taxon>Gammaproteobacteria</taxon>
        <taxon>Enterobacterales</taxon>
        <taxon>Enterobacteriaceae</taxon>
        <taxon>Salmonella</taxon>
    </lineage>
</organism>